<sequence length="189" mass="21259">MSKVYTNFTVKGLTEQLNKGKVIVYPTESVFGLGCNPDNENAINTLLKIKCRSWKKGLILVAANYTQLFKYVDDRYLNSLQLSRIFSTWPGPFTWVFPARSSTPMWLTGKFSSVAIRVSNFEPIRRLCLTFGKPLVSTSANVSGYLPARTIHAVYKQLGYDFPIMNTNVLGLPNPSIIRDAITGKIIRK</sequence>
<organism>
    <name type="scientific">Blochmanniella floridana</name>
    <dbReference type="NCBI Taxonomy" id="203907"/>
    <lineage>
        <taxon>Bacteria</taxon>
        <taxon>Pseudomonadati</taxon>
        <taxon>Pseudomonadota</taxon>
        <taxon>Gammaproteobacteria</taxon>
        <taxon>Enterobacterales</taxon>
        <taxon>Enterobacteriaceae</taxon>
        <taxon>ant endosymbionts</taxon>
        <taxon>Candidatus Blochmanniella</taxon>
    </lineage>
</organism>
<proteinExistence type="inferred from homology"/>
<protein>
    <recommendedName>
        <fullName evidence="1">Threonylcarbamoyl-AMP synthase</fullName>
        <shortName evidence="1">TC-AMP synthase</shortName>
        <ecNumber evidence="1">2.7.7.87</ecNumber>
    </recommendedName>
    <alternativeName>
        <fullName evidence="1">L-threonylcarbamoyladenylate synthase</fullName>
    </alternativeName>
    <alternativeName>
        <fullName evidence="1">t(6)A37 threonylcarbamoyladenosine biosynthesis protein TsaC</fullName>
    </alternativeName>
    <alternativeName>
        <fullName evidence="1">tRNA threonylcarbamoyladenosine biosynthesis protein TsaC</fullName>
    </alternativeName>
</protein>
<feature type="chain" id="PRO_0000352900" description="Threonylcarbamoyl-AMP synthase">
    <location>
        <begin position="1"/>
        <end position="189"/>
    </location>
</feature>
<feature type="domain" description="YrdC-like" evidence="1">
    <location>
        <begin position="7"/>
        <end position="189"/>
    </location>
</feature>
<reference key="1">
    <citation type="journal article" date="2003" name="Proc. Natl. Acad. Sci. U.S.A.">
        <title>The genome sequence of Blochmannia floridanus: comparative analysis of reduced genomes.</title>
        <authorList>
            <person name="Gil R."/>
            <person name="Silva F.J."/>
            <person name="Zientz E."/>
            <person name="Delmotte F."/>
            <person name="Gonzalez-Candelas F."/>
            <person name="Latorre A."/>
            <person name="Rausell C."/>
            <person name="Kamerbeek J."/>
            <person name="Gadau J."/>
            <person name="Hoelldobler B."/>
            <person name="van Ham R.C.H.J."/>
            <person name="Gross R."/>
            <person name="Moya A."/>
        </authorList>
    </citation>
    <scope>NUCLEOTIDE SEQUENCE [LARGE SCALE GENOMIC DNA]</scope>
</reference>
<gene>
    <name evidence="1" type="primary">tsaC</name>
    <name type="synonym">rimN</name>
    <name type="ordered locus">Bfl220</name>
</gene>
<name>TSAC_BLOFL</name>
<evidence type="ECO:0000255" key="1">
    <source>
        <dbReference type="HAMAP-Rule" id="MF_01852"/>
    </source>
</evidence>
<keyword id="KW-0067">ATP-binding</keyword>
<keyword id="KW-0963">Cytoplasm</keyword>
<keyword id="KW-0547">Nucleotide-binding</keyword>
<keyword id="KW-0548">Nucleotidyltransferase</keyword>
<keyword id="KW-1185">Reference proteome</keyword>
<keyword id="KW-0808">Transferase</keyword>
<keyword id="KW-0819">tRNA processing</keyword>
<dbReference type="EC" id="2.7.7.87" evidence="1"/>
<dbReference type="EMBL" id="BX248583">
    <property type="protein sequence ID" value="CAD83735.1"/>
    <property type="molecule type" value="Genomic_DNA"/>
</dbReference>
<dbReference type="SMR" id="Q7VQB9"/>
<dbReference type="STRING" id="203907.Bfl220"/>
<dbReference type="KEGG" id="bfl:Bfl220"/>
<dbReference type="eggNOG" id="COG0009">
    <property type="taxonomic scope" value="Bacteria"/>
</dbReference>
<dbReference type="HOGENOM" id="CLU_031397_6_0_6"/>
<dbReference type="OrthoDB" id="9814580at2"/>
<dbReference type="Proteomes" id="UP000002192">
    <property type="component" value="Chromosome"/>
</dbReference>
<dbReference type="GO" id="GO:0005737">
    <property type="term" value="C:cytoplasm"/>
    <property type="evidence" value="ECO:0007669"/>
    <property type="project" value="UniProtKB-SubCell"/>
</dbReference>
<dbReference type="GO" id="GO:0005524">
    <property type="term" value="F:ATP binding"/>
    <property type="evidence" value="ECO:0007669"/>
    <property type="project" value="UniProtKB-UniRule"/>
</dbReference>
<dbReference type="GO" id="GO:0003725">
    <property type="term" value="F:double-stranded RNA binding"/>
    <property type="evidence" value="ECO:0007669"/>
    <property type="project" value="InterPro"/>
</dbReference>
<dbReference type="GO" id="GO:0061710">
    <property type="term" value="F:L-threonylcarbamoyladenylate synthase"/>
    <property type="evidence" value="ECO:0007669"/>
    <property type="project" value="UniProtKB-EC"/>
</dbReference>
<dbReference type="GO" id="GO:0000049">
    <property type="term" value="F:tRNA binding"/>
    <property type="evidence" value="ECO:0007669"/>
    <property type="project" value="TreeGrafter"/>
</dbReference>
<dbReference type="GO" id="GO:0006450">
    <property type="term" value="P:regulation of translational fidelity"/>
    <property type="evidence" value="ECO:0007669"/>
    <property type="project" value="TreeGrafter"/>
</dbReference>
<dbReference type="GO" id="GO:0002949">
    <property type="term" value="P:tRNA threonylcarbamoyladenosine modification"/>
    <property type="evidence" value="ECO:0007669"/>
    <property type="project" value="UniProtKB-UniRule"/>
</dbReference>
<dbReference type="FunFam" id="3.90.870.10:FF:000004">
    <property type="entry name" value="Threonylcarbamoyl-AMP synthase"/>
    <property type="match status" value="1"/>
</dbReference>
<dbReference type="Gene3D" id="3.90.870.10">
    <property type="entry name" value="DHBP synthase"/>
    <property type="match status" value="1"/>
</dbReference>
<dbReference type="HAMAP" id="MF_01852">
    <property type="entry name" value="TsaC"/>
    <property type="match status" value="1"/>
</dbReference>
<dbReference type="InterPro" id="IPR017945">
    <property type="entry name" value="DHBP_synth_RibB-like_a/b_dom"/>
</dbReference>
<dbReference type="InterPro" id="IPR006070">
    <property type="entry name" value="Sua5-like_dom"/>
</dbReference>
<dbReference type="InterPro" id="IPR023535">
    <property type="entry name" value="TC-AMP_synthase"/>
</dbReference>
<dbReference type="InterPro" id="IPR050156">
    <property type="entry name" value="TC-AMP_synthase_SUA5"/>
</dbReference>
<dbReference type="PANTHER" id="PTHR17490">
    <property type="entry name" value="SUA5"/>
    <property type="match status" value="1"/>
</dbReference>
<dbReference type="PANTHER" id="PTHR17490:SF18">
    <property type="entry name" value="THREONYLCARBAMOYL-AMP SYNTHASE"/>
    <property type="match status" value="1"/>
</dbReference>
<dbReference type="Pfam" id="PF01300">
    <property type="entry name" value="Sua5_yciO_yrdC"/>
    <property type="match status" value="1"/>
</dbReference>
<dbReference type="SUPFAM" id="SSF55821">
    <property type="entry name" value="YrdC/RibB"/>
    <property type="match status" value="1"/>
</dbReference>
<dbReference type="PROSITE" id="PS51163">
    <property type="entry name" value="YRDC"/>
    <property type="match status" value="1"/>
</dbReference>
<accession>Q7VQB9</accession>
<comment type="function">
    <text evidence="1">Required for the formation of a threonylcarbamoyl group on adenosine at position 37 (t(6)A37) in tRNAs that read codons beginning with adenine. Catalyzes the conversion of L-threonine, HCO(3)(-)/CO(2) and ATP to give threonylcarbamoyl-AMP (TC-AMP) as the acyladenylate intermediate, with the release of diphosphate.</text>
</comment>
<comment type="catalytic activity">
    <reaction evidence="1">
        <text>L-threonine + hydrogencarbonate + ATP = L-threonylcarbamoyladenylate + diphosphate + H2O</text>
        <dbReference type="Rhea" id="RHEA:36407"/>
        <dbReference type="ChEBI" id="CHEBI:15377"/>
        <dbReference type="ChEBI" id="CHEBI:17544"/>
        <dbReference type="ChEBI" id="CHEBI:30616"/>
        <dbReference type="ChEBI" id="CHEBI:33019"/>
        <dbReference type="ChEBI" id="CHEBI:57926"/>
        <dbReference type="ChEBI" id="CHEBI:73682"/>
        <dbReference type="EC" id="2.7.7.87"/>
    </reaction>
</comment>
<comment type="subcellular location">
    <subcellularLocation>
        <location evidence="1">Cytoplasm</location>
    </subcellularLocation>
</comment>
<comment type="similarity">
    <text evidence="1">Belongs to the SUA5 family. TsaC subfamily.</text>
</comment>